<feature type="chain" id="PRO_1000018241" description="Tryptophan synthase alpha chain">
    <location>
        <begin position="1"/>
        <end position="266"/>
    </location>
</feature>
<feature type="active site" description="Proton acceptor" evidence="1">
    <location>
        <position position="45"/>
    </location>
</feature>
<feature type="active site" description="Proton acceptor" evidence="1">
    <location>
        <position position="56"/>
    </location>
</feature>
<evidence type="ECO:0000255" key="1">
    <source>
        <dbReference type="HAMAP-Rule" id="MF_00131"/>
    </source>
</evidence>
<sequence length="266" mass="27042">MTRLSNAFAKGRPALVTFVTGGDPTPGATDAILDALVEGGADVIELGMPFTDPMADGPAIQLANLRSLGAGTKTADVFRIAADFRARHPEVPLVLMGYANPMVTRGPDWFAAECVKAGVDGVICVDIPPEEDPELGPALRGAGVSLIRLATPTTDAARLPAVLEGSSGFLYYVSVAGITGMQQAAQASIEEAVARIKQSATIPVAVGFGVRTPEQAAAIAKVADGVVVGSALVDLVARHGADAAGPVKELTAALAAAVHSARKEIA</sequence>
<protein>
    <recommendedName>
        <fullName evidence="1">Tryptophan synthase alpha chain</fullName>
        <ecNumber evidence="1">4.2.1.20</ecNumber>
    </recommendedName>
</protein>
<gene>
    <name evidence="1" type="primary">trpA</name>
    <name type="ordered locus">Saro_1301</name>
</gene>
<accession>Q2G8S8</accession>
<keyword id="KW-0028">Amino-acid biosynthesis</keyword>
<keyword id="KW-0057">Aromatic amino acid biosynthesis</keyword>
<keyword id="KW-0456">Lyase</keyword>
<keyword id="KW-1185">Reference proteome</keyword>
<keyword id="KW-0822">Tryptophan biosynthesis</keyword>
<proteinExistence type="inferred from homology"/>
<name>TRPA_NOVAD</name>
<reference key="1">
    <citation type="submission" date="2006-01" db="EMBL/GenBank/DDBJ databases">
        <title>Complete sequence of Novosphingobium aromaticivorans DSM 12444.</title>
        <authorList>
            <consortium name="US DOE Joint Genome Institute"/>
            <person name="Copeland A."/>
            <person name="Lucas S."/>
            <person name="Lapidus A."/>
            <person name="Barry K."/>
            <person name="Detter J.C."/>
            <person name="Glavina T."/>
            <person name="Hammon N."/>
            <person name="Israni S."/>
            <person name="Pitluck S."/>
            <person name="Chain P."/>
            <person name="Malfatti S."/>
            <person name="Shin M."/>
            <person name="Vergez L."/>
            <person name="Schmutz J."/>
            <person name="Larimer F."/>
            <person name="Land M."/>
            <person name="Kyrpides N."/>
            <person name="Ivanova N."/>
            <person name="Fredrickson J."/>
            <person name="Balkwill D."/>
            <person name="Romine M.F."/>
            <person name="Richardson P."/>
        </authorList>
    </citation>
    <scope>NUCLEOTIDE SEQUENCE [LARGE SCALE GENOMIC DNA]</scope>
    <source>
        <strain>ATCC 700278 / DSM 12444 / CCUG 56034 / CIP 105152 / NBRC 16084 / F199</strain>
    </source>
</reference>
<dbReference type="EC" id="4.2.1.20" evidence="1"/>
<dbReference type="EMBL" id="CP000248">
    <property type="protein sequence ID" value="ABD25745.1"/>
    <property type="molecule type" value="Genomic_DNA"/>
</dbReference>
<dbReference type="RefSeq" id="WP_011444959.1">
    <property type="nucleotide sequence ID" value="NC_007794.1"/>
</dbReference>
<dbReference type="SMR" id="Q2G8S8"/>
<dbReference type="STRING" id="279238.Saro_1301"/>
<dbReference type="KEGG" id="nar:Saro_1301"/>
<dbReference type="eggNOG" id="COG0159">
    <property type="taxonomic scope" value="Bacteria"/>
</dbReference>
<dbReference type="HOGENOM" id="CLU_016734_0_0_5"/>
<dbReference type="UniPathway" id="UPA00035">
    <property type="reaction ID" value="UER00044"/>
</dbReference>
<dbReference type="Proteomes" id="UP000009134">
    <property type="component" value="Chromosome"/>
</dbReference>
<dbReference type="GO" id="GO:0005829">
    <property type="term" value="C:cytosol"/>
    <property type="evidence" value="ECO:0007669"/>
    <property type="project" value="TreeGrafter"/>
</dbReference>
<dbReference type="GO" id="GO:0004834">
    <property type="term" value="F:tryptophan synthase activity"/>
    <property type="evidence" value="ECO:0007669"/>
    <property type="project" value="UniProtKB-UniRule"/>
</dbReference>
<dbReference type="CDD" id="cd04724">
    <property type="entry name" value="Tryptophan_synthase_alpha"/>
    <property type="match status" value="1"/>
</dbReference>
<dbReference type="FunFam" id="3.20.20.70:FF:000037">
    <property type="entry name" value="Tryptophan synthase alpha chain"/>
    <property type="match status" value="1"/>
</dbReference>
<dbReference type="Gene3D" id="3.20.20.70">
    <property type="entry name" value="Aldolase class I"/>
    <property type="match status" value="1"/>
</dbReference>
<dbReference type="HAMAP" id="MF_00131">
    <property type="entry name" value="Trp_synth_alpha"/>
    <property type="match status" value="1"/>
</dbReference>
<dbReference type="InterPro" id="IPR013785">
    <property type="entry name" value="Aldolase_TIM"/>
</dbReference>
<dbReference type="InterPro" id="IPR011060">
    <property type="entry name" value="RibuloseP-bd_barrel"/>
</dbReference>
<dbReference type="InterPro" id="IPR018204">
    <property type="entry name" value="Trp_synthase_alpha_AS"/>
</dbReference>
<dbReference type="InterPro" id="IPR002028">
    <property type="entry name" value="Trp_synthase_suA"/>
</dbReference>
<dbReference type="NCBIfam" id="TIGR00262">
    <property type="entry name" value="trpA"/>
    <property type="match status" value="1"/>
</dbReference>
<dbReference type="PANTHER" id="PTHR43406:SF1">
    <property type="entry name" value="TRYPTOPHAN SYNTHASE ALPHA CHAIN, CHLOROPLASTIC"/>
    <property type="match status" value="1"/>
</dbReference>
<dbReference type="PANTHER" id="PTHR43406">
    <property type="entry name" value="TRYPTOPHAN SYNTHASE, ALPHA CHAIN"/>
    <property type="match status" value="1"/>
</dbReference>
<dbReference type="Pfam" id="PF00290">
    <property type="entry name" value="Trp_syntA"/>
    <property type="match status" value="1"/>
</dbReference>
<dbReference type="SUPFAM" id="SSF51366">
    <property type="entry name" value="Ribulose-phoshate binding barrel"/>
    <property type="match status" value="1"/>
</dbReference>
<dbReference type="PROSITE" id="PS00167">
    <property type="entry name" value="TRP_SYNTHASE_ALPHA"/>
    <property type="match status" value="1"/>
</dbReference>
<organism>
    <name type="scientific">Novosphingobium aromaticivorans (strain ATCC 700278 / DSM 12444 / CCUG 56034 / CIP 105152 / NBRC 16084 / F199)</name>
    <dbReference type="NCBI Taxonomy" id="279238"/>
    <lineage>
        <taxon>Bacteria</taxon>
        <taxon>Pseudomonadati</taxon>
        <taxon>Pseudomonadota</taxon>
        <taxon>Alphaproteobacteria</taxon>
        <taxon>Sphingomonadales</taxon>
        <taxon>Sphingomonadaceae</taxon>
        <taxon>Novosphingobium</taxon>
    </lineage>
</organism>
<comment type="function">
    <text evidence="1">The alpha subunit is responsible for the aldol cleavage of indoleglycerol phosphate to indole and glyceraldehyde 3-phosphate.</text>
</comment>
<comment type="catalytic activity">
    <reaction evidence="1">
        <text>(1S,2R)-1-C-(indol-3-yl)glycerol 3-phosphate + L-serine = D-glyceraldehyde 3-phosphate + L-tryptophan + H2O</text>
        <dbReference type="Rhea" id="RHEA:10532"/>
        <dbReference type="ChEBI" id="CHEBI:15377"/>
        <dbReference type="ChEBI" id="CHEBI:33384"/>
        <dbReference type="ChEBI" id="CHEBI:57912"/>
        <dbReference type="ChEBI" id="CHEBI:58866"/>
        <dbReference type="ChEBI" id="CHEBI:59776"/>
        <dbReference type="EC" id="4.2.1.20"/>
    </reaction>
</comment>
<comment type="pathway">
    <text evidence="1">Amino-acid biosynthesis; L-tryptophan biosynthesis; L-tryptophan from chorismate: step 5/5.</text>
</comment>
<comment type="subunit">
    <text evidence="1">Tetramer of two alpha and two beta chains.</text>
</comment>
<comment type="similarity">
    <text evidence="1">Belongs to the TrpA family.</text>
</comment>